<accession>Q2NVS2</accession>
<comment type="function">
    <text evidence="1">Catalyzes the decarboxylation of S-adenosylmethionine to S-adenosylmethioninamine (dcAdoMet), the propylamine donor required for the synthesis of the polyamines spermine and spermidine from the diamine putrescine.</text>
</comment>
<comment type="catalytic activity">
    <reaction evidence="1">
        <text>S-adenosyl-L-methionine + H(+) = S-adenosyl 3-(methylsulfanyl)propylamine + CO2</text>
        <dbReference type="Rhea" id="RHEA:15981"/>
        <dbReference type="ChEBI" id="CHEBI:15378"/>
        <dbReference type="ChEBI" id="CHEBI:16526"/>
        <dbReference type="ChEBI" id="CHEBI:57443"/>
        <dbReference type="ChEBI" id="CHEBI:59789"/>
        <dbReference type="EC" id="4.1.1.50"/>
    </reaction>
</comment>
<comment type="cofactor">
    <cofactor evidence="1">
        <name>pyruvate</name>
        <dbReference type="ChEBI" id="CHEBI:15361"/>
    </cofactor>
    <text evidence="1">Binds 1 pyruvoyl group covalently per subunit.</text>
</comment>
<comment type="pathway">
    <text evidence="1">Amine and polyamine biosynthesis; S-adenosylmethioninamine biosynthesis; S-adenosylmethioninamine from S-adenosyl-L-methionine: step 1/1.</text>
</comment>
<comment type="subunit">
    <text evidence="1">Heterooctamer of four alpha and four beta chains arranged as a tetramer of alpha/beta heterodimers.</text>
</comment>
<comment type="PTM">
    <text evidence="1">Is synthesized initially as an inactive proenzyme. Formation of the active enzyme involves a self-maturation process in which the active site pyruvoyl group is generated from an internal serine residue via an autocatalytic post-translational modification. Two non-identical subunits are generated from the proenzyme in this reaction, and the pyruvate is formed at the N-terminus of the alpha chain, which is derived from the carboxyl end of the proenzyme. The post-translation cleavage follows an unusual pathway, termed non-hydrolytic serinolysis, in which the side chain hydroxyl group of the serine supplies its oxygen atom to form the C-terminus of the beta chain, while the remainder of the serine residue undergoes an oxidative deamination to produce ammonia and the pyruvoyl group blocking the N-terminus of the alpha chain.</text>
</comment>
<comment type="similarity">
    <text evidence="1">Belongs to the prokaryotic AdoMetDC family. Type 2 subfamily.</text>
</comment>
<organism>
    <name type="scientific">Sodalis glossinidius (strain morsitans)</name>
    <dbReference type="NCBI Taxonomy" id="343509"/>
    <lineage>
        <taxon>Bacteria</taxon>
        <taxon>Pseudomonadati</taxon>
        <taxon>Pseudomonadota</taxon>
        <taxon>Gammaproteobacteria</taxon>
        <taxon>Enterobacterales</taxon>
        <taxon>Bruguierivoracaceae</taxon>
        <taxon>Sodalis</taxon>
    </lineage>
</organism>
<gene>
    <name evidence="1" type="primary">speD</name>
    <name type="ordered locus">SG0478</name>
</gene>
<reference key="1">
    <citation type="journal article" date="2006" name="Genome Res.">
        <title>Massive genome erosion and functional adaptations provide insights into the symbiotic lifestyle of Sodalis glossinidius in the tsetse host.</title>
        <authorList>
            <person name="Toh H."/>
            <person name="Weiss B.L."/>
            <person name="Perkin S.A.H."/>
            <person name="Yamashita A."/>
            <person name="Oshima K."/>
            <person name="Hattori M."/>
            <person name="Aksoy S."/>
        </authorList>
    </citation>
    <scope>NUCLEOTIDE SEQUENCE [LARGE SCALE GENOMIC DNA]</scope>
    <source>
        <strain>morsitans</strain>
    </source>
</reference>
<feature type="chain" id="PRO_0000273615" description="S-adenosylmethionine decarboxylase beta chain" evidence="1">
    <location>
        <begin position="1"/>
        <end position="111"/>
    </location>
</feature>
<feature type="chain" id="PRO_0000273616" description="S-adenosylmethionine decarboxylase alpha chain" evidence="1">
    <location>
        <begin position="112"/>
        <end position="264"/>
    </location>
</feature>
<feature type="active site" description="Schiff-base intermediate with substrate; via pyruvic acid" evidence="1">
    <location>
        <position position="112"/>
    </location>
</feature>
<feature type="active site" description="Proton acceptor; for processing activity" evidence="1">
    <location>
        <position position="117"/>
    </location>
</feature>
<feature type="active site" description="Proton donor; for catalytic activity" evidence="1">
    <location>
        <position position="140"/>
    </location>
</feature>
<feature type="site" description="Cleavage (non-hydrolytic); by autolysis" evidence="1">
    <location>
        <begin position="111"/>
        <end position="112"/>
    </location>
</feature>
<feature type="modified residue" description="Pyruvic acid (Ser); by autocatalysis" evidence="1">
    <location>
        <position position="112"/>
    </location>
</feature>
<protein>
    <recommendedName>
        <fullName evidence="1">S-adenosylmethionine decarboxylase proenzyme</fullName>
        <shortName evidence="1">AdoMetDC</shortName>
        <shortName evidence="1">SAMDC</shortName>
        <ecNumber evidence="1">4.1.1.50</ecNumber>
    </recommendedName>
    <component>
        <recommendedName>
            <fullName evidence="1">S-adenosylmethionine decarboxylase beta chain</fullName>
        </recommendedName>
    </component>
    <component>
        <recommendedName>
            <fullName evidence="1">S-adenosylmethionine decarboxylase alpha chain</fullName>
        </recommendedName>
    </component>
</protein>
<dbReference type="EC" id="4.1.1.50" evidence="1"/>
<dbReference type="EMBL" id="AP008232">
    <property type="protein sequence ID" value="BAE73753.1"/>
    <property type="molecule type" value="Genomic_DNA"/>
</dbReference>
<dbReference type="RefSeq" id="WP_011410451.1">
    <property type="nucleotide sequence ID" value="NC_007712.1"/>
</dbReference>
<dbReference type="SMR" id="Q2NVS2"/>
<dbReference type="STRING" id="343509.SG0478"/>
<dbReference type="KEGG" id="sgl:SG0478"/>
<dbReference type="eggNOG" id="COG1586">
    <property type="taxonomic scope" value="Bacteria"/>
</dbReference>
<dbReference type="HOGENOM" id="CLU_092007_0_0_6"/>
<dbReference type="OrthoDB" id="5290709at2"/>
<dbReference type="BioCyc" id="SGLO343509:SGP1_RS04280-MONOMER"/>
<dbReference type="UniPathway" id="UPA00331">
    <property type="reaction ID" value="UER00451"/>
</dbReference>
<dbReference type="Proteomes" id="UP000001932">
    <property type="component" value="Chromosome"/>
</dbReference>
<dbReference type="GO" id="GO:0005829">
    <property type="term" value="C:cytosol"/>
    <property type="evidence" value="ECO:0007669"/>
    <property type="project" value="TreeGrafter"/>
</dbReference>
<dbReference type="GO" id="GO:0004014">
    <property type="term" value="F:adenosylmethionine decarboxylase activity"/>
    <property type="evidence" value="ECO:0007669"/>
    <property type="project" value="UniProtKB-UniRule"/>
</dbReference>
<dbReference type="GO" id="GO:0008295">
    <property type="term" value="P:spermidine biosynthetic process"/>
    <property type="evidence" value="ECO:0007669"/>
    <property type="project" value="UniProtKB-UniRule"/>
</dbReference>
<dbReference type="FunFam" id="3.60.90.10:FF:000001">
    <property type="entry name" value="S-adenosylmethionine decarboxylase proenzyme"/>
    <property type="match status" value="1"/>
</dbReference>
<dbReference type="Gene3D" id="3.60.90.10">
    <property type="entry name" value="S-adenosylmethionine decarboxylase"/>
    <property type="match status" value="1"/>
</dbReference>
<dbReference type="HAMAP" id="MF_00465">
    <property type="entry name" value="AdoMetDC_2"/>
    <property type="match status" value="1"/>
</dbReference>
<dbReference type="InterPro" id="IPR003826">
    <property type="entry name" value="AdoMetDC_fam_prok"/>
</dbReference>
<dbReference type="InterPro" id="IPR009165">
    <property type="entry name" value="S-AdoMet_deCO2ase_bac"/>
</dbReference>
<dbReference type="InterPro" id="IPR016067">
    <property type="entry name" value="S-AdoMet_deCO2ase_core"/>
</dbReference>
<dbReference type="NCBIfam" id="TIGR03331">
    <property type="entry name" value="SAM_DCase_Eco"/>
    <property type="match status" value="1"/>
</dbReference>
<dbReference type="PANTHER" id="PTHR33866">
    <property type="entry name" value="S-ADENOSYLMETHIONINE DECARBOXYLASE PROENZYME"/>
    <property type="match status" value="1"/>
</dbReference>
<dbReference type="PANTHER" id="PTHR33866:SF1">
    <property type="entry name" value="S-ADENOSYLMETHIONINE DECARBOXYLASE PROENZYME"/>
    <property type="match status" value="1"/>
</dbReference>
<dbReference type="Pfam" id="PF02675">
    <property type="entry name" value="AdoMet_dc"/>
    <property type="match status" value="1"/>
</dbReference>
<dbReference type="PIRSF" id="PIRSF001356">
    <property type="entry name" value="SAM_decarboxylas"/>
    <property type="match status" value="1"/>
</dbReference>
<dbReference type="SUPFAM" id="SSF56276">
    <property type="entry name" value="S-adenosylmethionine decarboxylase"/>
    <property type="match status" value="1"/>
</dbReference>
<keyword id="KW-0068">Autocatalytic cleavage</keyword>
<keyword id="KW-0210">Decarboxylase</keyword>
<keyword id="KW-0456">Lyase</keyword>
<keyword id="KW-0620">Polyamine biosynthesis</keyword>
<keyword id="KW-0670">Pyruvate</keyword>
<keyword id="KW-0949">S-adenosyl-L-methionine</keyword>
<keyword id="KW-0704">Schiff base</keyword>
<keyword id="KW-0745">Spermidine biosynthesis</keyword>
<keyword id="KW-0865">Zymogen</keyword>
<sequence length="264" mass="30250">MQKLKLHGFNNLTKSLSFCIYDICYAKTADDRDGYITYIDEQYNANRLTEILSETCSMIGANILNIARQDYEPQGASVTILVSEEPVDPGSIDTSEHPGPLPESVVAHLDKSHICVHTYPESHPEGGLCTFRADIEVSTCGVISPLKALNYLIHQLESDIVTMDYRVRGFTRDINGVKHYIDHEINSIQNFMSKDMKALYHMMDVNVYQENIFHTKIMLKDFDLKHYLFNARPDDLSAEERKAITDLLYKEMQEIYYGRNLPVL</sequence>
<evidence type="ECO:0000255" key="1">
    <source>
        <dbReference type="HAMAP-Rule" id="MF_00465"/>
    </source>
</evidence>
<name>SPED_SODGM</name>
<proteinExistence type="inferred from homology"/>